<sequence length="67" mass="7177">MKNVFKALTVLLTLFSLTGCGLKGPLYFPPADKNAPPPTKPVETQTQSTVPDKNDRATGDGPSQVNY</sequence>
<comment type="function">
    <text evidence="1">Component of the lipopolysaccharide (LPS) transport (Lpt) pathway that promotes efficient assembly of the outer membrane LPS translocon (LptDE) by the BAM complex (By similarity). Facilitates oxidative maturation of LptD by stabilizing a conformation of the LPS translocon in which LptD can efficiently acquire native disulfide bonds, thereby activating the LPS translocon (By similarity).</text>
</comment>
<comment type="subunit">
    <text evidence="1">Interacts with the outer membrane embedded portion of the LPS translocon formed by LptD and LptE (LptDE).</text>
</comment>
<comment type="subcellular location">
    <subcellularLocation>
        <location evidence="1">Cell outer membrane</location>
        <topology evidence="2">Lipid-anchor</topology>
    </subcellularLocation>
</comment>
<comment type="similarity">
    <text evidence="4">Belongs to the LptM family.</text>
</comment>
<name>LPTM_ECO57</name>
<protein>
    <recommendedName>
        <fullName evidence="1">LPS-assembly lipoprotein LptM</fullName>
    </recommendedName>
</protein>
<proteinExistence type="inferred from homology"/>
<reference key="1">
    <citation type="journal article" date="2001" name="Nature">
        <title>Genome sequence of enterohaemorrhagic Escherichia coli O157:H7.</title>
        <authorList>
            <person name="Perna N.T."/>
            <person name="Plunkett G. III"/>
            <person name="Burland V."/>
            <person name="Mau B."/>
            <person name="Glasner J.D."/>
            <person name="Rose D.J."/>
            <person name="Mayhew G.F."/>
            <person name="Evans P.S."/>
            <person name="Gregor J."/>
            <person name="Kirkpatrick H.A."/>
            <person name="Posfai G."/>
            <person name="Hackett J."/>
            <person name="Klink S."/>
            <person name="Boutin A."/>
            <person name="Shao Y."/>
            <person name="Miller L."/>
            <person name="Grotbeck E.J."/>
            <person name="Davis N.W."/>
            <person name="Lim A."/>
            <person name="Dimalanta E.T."/>
            <person name="Potamousis K."/>
            <person name="Apodaca J."/>
            <person name="Anantharaman T.S."/>
            <person name="Lin J."/>
            <person name="Yen G."/>
            <person name="Schwartz D.C."/>
            <person name="Welch R.A."/>
            <person name="Blattner F.R."/>
        </authorList>
    </citation>
    <scope>NUCLEOTIDE SEQUENCE [LARGE SCALE GENOMIC DNA]</scope>
    <source>
        <strain>O157:H7 / EDL933 / ATCC 700927 / EHEC</strain>
    </source>
</reference>
<reference key="2">
    <citation type="journal article" date="2001" name="DNA Res.">
        <title>Complete genome sequence of enterohemorrhagic Escherichia coli O157:H7 and genomic comparison with a laboratory strain K-12.</title>
        <authorList>
            <person name="Hayashi T."/>
            <person name="Makino K."/>
            <person name="Ohnishi M."/>
            <person name="Kurokawa K."/>
            <person name="Ishii K."/>
            <person name="Yokoyama K."/>
            <person name="Han C.-G."/>
            <person name="Ohtsubo E."/>
            <person name="Nakayama K."/>
            <person name="Murata T."/>
            <person name="Tanaka M."/>
            <person name="Tobe T."/>
            <person name="Iida T."/>
            <person name="Takami H."/>
            <person name="Honda T."/>
            <person name="Sasakawa C."/>
            <person name="Ogasawara N."/>
            <person name="Yasunaga T."/>
            <person name="Kuhara S."/>
            <person name="Shiba T."/>
            <person name="Hattori M."/>
            <person name="Shinagawa H."/>
        </authorList>
    </citation>
    <scope>NUCLEOTIDE SEQUENCE [LARGE SCALE GENOMIC DNA]</scope>
    <source>
        <strain>O157:H7 / Sakai / RIMD 0509952 / EHEC</strain>
    </source>
</reference>
<gene>
    <name evidence="1" type="primary">lptM</name>
    <name type="synonym">yifL</name>
    <name type="ordered locus">Z5325</name>
    <name type="ordered locus">ECs4737.1</name>
</gene>
<organism>
    <name type="scientific">Escherichia coli O157:H7</name>
    <dbReference type="NCBI Taxonomy" id="83334"/>
    <lineage>
        <taxon>Bacteria</taxon>
        <taxon>Pseudomonadati</taxon>
        <taxon>Pseudomonadota</taxon>
        <taxon>Gammaproteobacteria</taxon>
        <taxon>Enterobacterales</taxon>
        <taxon>Enterobacteriaceae</taxon>
        <taxon>Escherichia</taxon>
    </lineage>
</organism>
<evidence type="ECO:0000250" key="1">
    <source>
        <dbReference type="UniProtKB" id="P0ADN6"/>
    </source>
</evidence>
<evidence type="ECO:0000255" key="2">
    <source>
        <dbReference type="PROSITE-ProRule" id="PRU00303"/>
    </source>
</evidence>
<evidence type="ECO:0000256" key="3">
    <source>
        <dbReference type="SAM" id="MobiDB-lite"/>
    </source>
</evidence>
<evidence type="ECO:0000305" key="4"/>
<dbReference type="EMBL" id="AE005174">
    <property type="protein sequence ID" value="AAG59001.1"/>
    <property type="molecule type" value="Genomic_DNA"/>
</dbReference>
<dbReference type="EMBL" id="BA000007">
    <property type="status" value="NOT_ANNOTATED_CDS"/>
    <property type="molecule type" value="Genomic_DNA"/>
</dbReference>
<dbReference type="PIR" id="E86067">
    <property type="entry name" value="E86067"/>
</dbReference>
<dbReference type="RefSeq" id="WP_000799889.1">
    <property type="nucleotide sequence ID" value="NZ_VOAI01000017.1"/>
</dbReference>
<dbReference type="SMR" id="P0ADN8"/>
<dbReference type="STRING" id="155864.Z5325"/>
<dbReference type="KEGG" id="ece:Z5325"/>
<dbReference type="PATRIC" id="fig|83334.175.peg.2321"/>
<dbReference type="eggNOG" id="COG5567">
    <property type="taxonomic scope" value="Bacteria"/>
</dbReference>
<dbReference type="OMA" id="GFNEMKT"/>
<dbReference type="Proteomes" id="UP000000558">
    <property type="component" value="Chromosome"/>
</dbReference>
<dbReference type="Proteomes" id="UP000002519">
    <property type="component" value="Chromosome"/>
</dbReference>
<dbReference type="GO" id="GO:0009279">
    <property type="term" value="C:cell outer membrane"/>
    <property type="evidence" value="ECO:0007669"/>
    <property type="project" value="UniProtKB-SubCell"/>
</dbReference>
<dbReference type="InterPro" id="IPR032831">
    <property type="entry name" value="LptM_cons"/>
</dbReference>
<dbReference type="NCBIfam" id="NF047847">
    <property type="entry name" value="SS_mature_LptM"/>
    <property type="match status" value="1"/>
</dbReference>
<dbReference type="Pfam" id="PF13627">
    <property type="entry name" value="LptM_cons"/>
    <property type="match status" value="1"/>
</dbReference>
<dbReference type="PROSITE" id="PS51257">
    <property type="entry name" value="PROKAR_LIPOPROTEIN"/>
    <property type="match status" value="1"/>
</dbReference>
<keyword id="KW-0998">Cell outer membrane</keyword>
<keyword id="KW-0449">Lipoprotein</keyword>
<keyword id="KW-0472">Membrane</keyword>
<keyword id="KW-0564">Palmitate</keyword>
<keyword id="KW-1185">Reference proteome</keyword>
<keyword id="KW-0732">Signal</keyword>
<feature type="signal peptide" evidence="2">
    <location>
        <begin position="1"/>
        <end position="19"/>
    </location>
</feature>
<feature type="chain" id="PRO_0000043224" description="LPS-assembly lipoprotein LptM">
    <location>
        <begin position="20"/>
        <end position="67"/>
    </location>
</feature>
<feature type="region of interest" description="Disordered" evidence="3">
    <location>
        <begin position="26"/>
        <end position="67"/>
    </location>
</feature>
<feature type="compositionally biased region" description="Polar residues" evidence="3">
    <location>
        <begin position="42"/>
        <end position="51"/>
    </location>
</feature>
<feature type="lipid moiety-binding region" description="N-palmitoyl cysteine" evidence="2">
    <location>
        <position position="20"/>
    </location>
</feature>
<feature type="lipid moiety-binding region" description="S-diacylglycerol cysteine" evidence="2">
    <location>
        <position position="20"/>
    </location>
</feature>
<accession>P0ADN8</accession>
<accession>P39166</accession>
<accession>Q8X3Y5</accession>